<sequence>MALLALLLVVALPRVWTDANLTARQRDPEDSQRTDEGDNRVWCHVCERENTFECQNPRRCKWTEPYCVIAAVKIFPRFFMVAKQCSAGCAAMERPKPEEKRFLLEEPMPFFYLKCCKIRYCNLEGPPINSSVFKEYAGSMGESCGGLWLAILLLLASIAAGLSLS</sequence>
<proteinExistence type="evidence at protein level"/>
<keyword id="KW-0025">Alternative splicing</keyword>
<keyword id="KW-1003">Cell membrane</keyword>
<keyword id="KW-0963">Cytoplasm</keyword>
<keyword id="KW-0968">Cytoplasmic vesicle</keyword>
<keyword id="KW-0325">Glycoprotein</keyword>
<keyword id="KW-0336">GPI-anchor</keyword>
<keyword id="KW-0449">Lipoprotein</keyword>
<keyword id="KW-0472">Membrane</keyword>
<keyword id="KW-1267">Proteomics identification</keyword>
<keyword id="KW-1185">Reference proteome</keyword>
<keyword id="KW-0964">Secreted</keyword>
<keyword id="KW-0732">Signal</keyword>
<feature type="signal peptide" evidence="2">
    <location>
        <begin position="1"/>
        <end position="17"/>
    </location>
</feature>
<feature type="chain" id="PRO_0000337084" description="Lymphocyte antigen 6K">
    <location>
        <begin position="18"/>
        <end position="138"/>
    </location>
</feature>
<feature type="propeptide" id="PRO_0000337085" description="Removed in mature form" evidence="2">
    <location>
        <begin position="139"/>
        <end position="165"/>
    </location>
</feature>
<feature type="domain" description="UPAR/Ly6">
    <location>
        <begin position="47"/>
        <end position="141"/>
    </location>
</feature>
<feature type="lipid moiety-binding region" description="GPI-anchor amidated glycine" evidence="2">
    <location>
        <position position="138"/>
    </location>
</feature>
<feature type="glycosylation site" description="N-linked (GlcNAc...) asparagine" evidence="2">
    <location>
        <position position="20"/>
    </location>
</feature>
<feature type="splice variant" id="VSP_045602" description="In isoform 2." evidence="7">
    <original>KIFPRFFMVAKQCSAGCAAMERPKPEEKRFLLE</original>
    <variation>TVLRWLCSDGETQARGEAVSPGRAHALLLPQVL</variation>
    <location>
        <begin position="73"/>
        <end position="105"/>
    </location>
</feature>
<feature type="splice variant" id="VSP_045603" description="In isoform 2." evidence="7">
    <location>
        <begin position="106"/>
        <end position="165"/>
    </location>
</feature>
<feature type="sequence conflict" description="In Ref. 1; CAA04692." evidence="8" ref="1">
    <original>E</original>
    <variation>Q</variation>
    <location>
        <position position="29"/>
    </location>
</feature>
<feature type="sequence conflict" description="In Ref. 1; CAA04692." evidence="8" ref="1">
    <original>V</original>
    <variation>A</variation>
    <location>
        <position position="41"/>
    </location>
</feature>
<name>LY6K_HUMAN</name>
<protein>
    <recommendedName>
        <fullName evidence="8">Lymphocyte antigen 6K</fullName>
        <shortName evidence="5">Ly-6K</shortName>
    </recommendedName>
</protein>
<organism>
    <name type="scientific">Homo sapiens</name>
    <name type="common">Human</name>
    <dbReference type="NCBI Taxonomy" id="9606"/>
    <lineage>
        <taxon>Eukaryota</taxon>
        <taxon>Metazoa</taxon>
        <taxon>Chordata</taxon>
        <taxon>Craniata</taxon>
        <taxon>Vertebrata</taxon>
        <taxon>Euteleostomi</taxon>
        <taxon>Mammalia</taxon>
        <taxon>Eutheria</taxon>
        <taxon>Euarchontoglires</taxon>
        <taxon>Primates</taxon>
        <taxon>Haplorrhini</taxon>
        <taxon>Catarrhini</taxon>
        <taxon>Hominidae</taxon>
        <taxon>Homo</taxon>
    </lineage>
</organism>
<accession>Q17RY6</accession>
<accession>G3V116</accession>
<accession>O15227</accession>
<accession>Q9BVD7</accession>
<gene>
    <name evidence="9" type="primary">LY6K</name>
    <name evidence="6" type="synonym">CO16</name>
</gene>
<reference key="1">
    <citation type="submission" date="1997-09" db="EMBL/GenBank/DDBJ databases">
        <title>Identification and characterization of a novel cDNA not expressed in Fanconi anemia fibroblasts and B-cell lines.</title>
        <authorList>
            <person name="Machl A.W."/>
            <person name="Planitzer S.A."/>
            <person name="Rueckels M."/>
            <person name="Kubbies M."/>
        </authorList>
    </citation>
    <scope>NUCLEOTIDE SEQUENCE [MRNA] (ISOFORM 1)</scope>
    <source>
        <tissue>Fibroblast</tissue>
    </source>
</reference>
<reference key="2">
    <citation type="journal article" date="2006" name="Nature">
        <title>DNA sequence and analysis of human chromosome 8.</title>
        <authorList>
            <person name="Nusbaum C."/>
            <person name="Mikkelsen T.S."/>
            <person name="Zody M.C."/>
            <person name="Asakawa S."/>
            <person name="Taudien S."/>
            <person name="Garber M."/>
            <person name="Kodira C.D."/>
            <person name="Schueler M.G."/>
            <person name="Shimizu A."/>
            <person name="Whittaker C.A."/>
            <person name="Chang J.L."/>
            <person name="Cuomo C.A."/>
            <person name="Dewar K."/>
            <person name="FitzGerald M.G."/>
            <person name="Yang X."/>
            <person name="Allen N.R."/>
            <person name="Anderson S."/>
            <person name="Asakawa T."/>
            <person name="Blechschmidt K."/>
            <person name="Bloom T."/>
            <person name="Borowsky M.L."/>
            <person name="Butler J."/>
            <person name="Cook A."/>
            <person name="Corum B."/>
            <person name="DeArellano K."/>
            <person name="DeCaprio D."/>
            <person name="Dooley K.T."/>
            <person name="Dorris L. III"/>
            <person name="Engels R."/>
            <person name="Gloeckner G."/>
            <person name="Hafez N."/>
            <person name="Hagopian D.S."/>
            <person name="Hall J.L."/>
            <person name="Ishikawa S.K."/>
            <person name="Jaffe D.B."/>
            <person name="Kamat A."/>
            <person name="Kudoh J."/>
            <person name="Lehmann R."/>
            <person name="Lokitsang T."/>
            <person name="Macdonald P."/>
            <person name="Major J.E."/>
            <person name="Matthews C.D."/>
            <person name="Mauceli E."/>
            <person name="Menzel U."/>
            <person name="Mihalev A.H."/>
            <person name="Minoshima S."/>
            <person name="Murayama Y."/>
            <person name="Naylor J.W."/>
            <person name="Nicol R."/>
            <person name="Nguyen C."/>
            <person name="O'Leary S.B."/>
            <person name="O'Neill K."/>
            <person name="Parker S.C.J."/>
            <person name="Polley A."/>
            <person name="Raymond C.K."/>
            <person name="Reichwald K."/>
            <person name="Rodriguez J."/>
            <person name="Sasaki T."/>
            <person name="Schilhabel M."/>
            <person name="Siddiqui R."/>
            <person name="Smith C.L."/>
            <person name="Sneddon T.P."/>
            <person name="Talamas J.A."/>
            <person name="Tenzin P."/>
            <person name="Topham K."/>
            <person name="Venkataraman V."/>
            <person name="Wen G."/>
            <person name="Yamazaki S."/>
            <person name="Young S.K."/>
            <person name="Zeng Q."/>
            <person name="Zimmer A.R."/>
            <person name="Rosenthal A."/>
            <person name="Birren B.W."/>
            <person name="Platzer M."/>
            <person name="Shimizu N."/>
            <person name="Lander E.S."/>
        </authorList>
    </citation>
    <scope>NUCLEOTIDE SEQUENCE [LARGE SCALE GENOMIC DNA]</scope>
</reference>
<reference key="3">
    <citation type="submission" date="2005-09" db="EMBL/GenBank/DDBJ databases">
        <authorList>
            <person name="Mural R.J."/>
            <person name="Istrail S."/>
            <person name="Sutton G.G."/>
            <person name="Florea L."/>
            <person name="Halpern A.L."/>
            <person name="Mobarry C.M."/>
            <person name="Lippert R."/>
            <person name="Walenz B."/>
            <person name="Shatkay H."/>
            <person name="Dew I."/>
            <person name="Miller J.R."/>
            <person name="Flanigan M.J."/>
            <person name="Edwards N.J."/>
            <person name="Bolanos R."/>
            <person name="Fasulo D."/>
            <person name="Halldorsson B.V."/>
            <person name="Hannenhalli S."/>
            <person name="Turner R."/>
            <person name="Yooseph S."/>
            <person name="Lu F."/>
            <person name="Nusskern D.R."/>
            <person name="Shue B.C."/>
            <person name="Zheng X.H."/>
            <person name="Zhong F."/>
            <person name="Delcher A.L."/>
            <person name="Huson D.H."/>
            <person name="Kravitz S.A."/>
            <person name="Mouchard L."/>
            <person name="Reinert K."/>
            <person name="Remington K.A."/>
            <person name="Clark A.G."/>
            <person name="Waterman M.S."/>
            <person name="Eichler E.E."/>
            <person name="Adams M.D."/>
            <person name="Hunkapiller M.W."/>
            <person name="Myers E.W."/>
            <person name="Venter J.C."/>
        </authorList>
    </citation>
    <scope>NUCLEOTIDE SEQUENCE [LARGE SCALE GENOMIC DNA]</scope>
</reference>
<reference key="4">
    <citation type="journal article" date="2004" name="Genome Res.">
        <title>The status, quality, and expansion of the NIH full-length cDNA project: the Mammalian Gene Collection (MGC).</title>
        <authorList>
            <consortium name="The MGC Project Team"/>
        </authorList>
    </citation>
    <scope>NUCLEOTIDE SEQUENCE [LARGE SCALE MRNA] (ISOFORM 1)</scope>
    <source>
        <tissue>Brain</tissue>
        <tissue>Cervix</tissue>
    </source>
</reference>
<reference key="5">
    <citation type="submission" date="1999-06" db="EMBL/GenBank/DDBJ databases">
        <authorList>
            <consortium name="The Cancer Genome Anatomy Project (CGAP) at the National Cancer Institute"/>
        </authorList>
    </citation>
    <scope>NUCLEOTIDE SEQUENCE [LARGE SCALE MRNA] OF 1-104 (ISOFORM 2)</scope>
</reference>
<reference key="6">
    <citation type="journal article" date="2003" name="Int. J. Cancer">
        <title>Characterization of the human Ly-6 antigens, the newly annotated member Ly-6K included, as molecular markers for head-and-neck squamous cell carcinoma.</title>
        <authorList>
            <person name="de Nooij-van Dalen A.G."/>
            <person name="van Dongen G.A.M.S."/>
            <person name="Smeets S.J."/>
            <person name="Nieuwenhuis E.J.C."/>
            <person name="Stigter-van Walsum M."/>
            <person name="Snow G.B."/>
            <person name="Brakenhoff R.H."/>
        </authorList>
    </citation>
    <scope>TISSUE SPECIFICITY</scope>
</reference>
<reference key="7">
    <citation type="journal article" date="2007" name="Cancer Res.">
        <title>Cancer-testis antigen lymphocyte antigen 6 complex locus K is a serologic biomarker and a therapeutic target for lung and esophageal carcinomas.</title>
        <authorList>
            <person name="Ishikawa N."/>
            <person name="Takano A."/>
            <person name="Yasui W."/>
            <person name="Inai K."/>
            <person name="Nishimura H."/>
            <person name="Ito H."/>
            <person name="Miyagi Y."/>
            <person name="Nakayama H."/>
            <person name="Fujita M."/>
            <person name="Hosokawa M."/>
            <person name="Tsuchiya E."/>
            <person name="Kohno N."/>
            <person name="Nakamura Y."/>
            <person name="Daigo Y."/>
        </authorList>
    </citation>
    <scope>FUNCTION</scope>
    <scope>SUBCELLULAR LOCATION</scope>
    <scope>TISSUE SPECIFICITY</scope>
</reference>
<reference key="8">
    <citation type="journal article" date="2011" name="BMC Syst. Biol.">
        <title>Initial characterization of the human central proteome.</title>
        <authorList>
            <person name="Burkard T.R."/>
            <person name="Planyavsky M."/>
            <person name="Kaupe I."/>
            <person name="Breitwieser F.P."/>
            <person name="Buerckstuemmer T."/>
            <person name="Bennett K.L."/>
            <person name="Superti-Furga G."/>
            <person name="Colinge J."/>
        </authorList>
    </citation>
    <scope>IDENTIFICATION BY MASS SPECTROMETRY [LARGE SCALE ANALYSIS]</scope>
</reference>
<comment type="function">
    <text evidence="1 4">Required for sperm migration into the oviduct and male fertility by controlling binding of sperm to zona pellucida (By similarity). May play a role in cell growth (PubMed:18089789).</text>
</comment>
<comment type="subunit">
    <text evidence="1">Interacts with TEX101.</text>
</comment>
<comment type="subcellular location">
    <subcellularLocation>
        <location evidence="4">Secreted</location>
    </subcellularLocation>
    <subcellularLocation>
        <location evidence="4">Cytoplasm</location>
    </subcellularLocation>
    <subcellularLocation>
        <location evidence="1">Cell membrane</location>
        <topology evidence="1">Lipid-anchor</topology>
        <topology evidence="1">GPI-anchor</topology>
    </subcellularLocation>
    <subcellularLocation>
        <location evidence="1">Cytoplasmic vesicle</location>
        <location evidence="1">Secretory vesicle</location>
        <location evidence="1">Acrosome</location>
    </subcellularLocation>
    <subcellularLocation>
        <location evidence="1">Membrane raft</location>
    </subcellularLocation>
</comment>
<comment type="alternative products">
    <event type="alternative splicing"/>
    <isoform>
        <id>Q17RY6-1</id>
        <name>1</name>
        <sequence type="displayed"/>
    </isoform>
    <isoform>
        <id>Q17RY6-2</id>
        <name>2</name>
        <sequence type="described" ref="VSP_045602 VSP_045603"/>
    </isoform>
</comment>
<comment type="tissue specificity">
    <text evidence="3 4">Specifically expressed in testis (at protein level).</text>
</comment>
<comment type="sequence caution" evidence="8">
    <conflict type="erroneous initiation">
        <sequence resource="EMBL-CDS" id="AAH01291"/>
    </conflict>
</comment>
<comment type="sequence caution" evidence="8">
    <conflict type="erroneous initiation">
        <sequence resource="EMBL-CDS" id="AAI17143"/>
    </conflict>
</comment>
<comment type="sequence caution" evidence="8">
    <conflict type="erroneous initiation">
        <sequence resource="EMBL-CDS" id="AAI17145"/>
    </conflict>
</comment>
<comment type="sequence caution" evidence="8">
    <conflict type="erroneous initiation">
        <sequence resource="EMBL-CDS" id="CAA04692"/>
    </conflict>
    <text>Extended N-terminus.</text>
</comment>
<comment type="sequence caution" evidence="8">
    <conflict type="frameshift">
        <sequence resource="EMBL-CDS" id="CAA04692"/>
    </conflict>
</comment>
<comment type="sequence caution" evidence="8">
    <conflict type="erroneous initiation">
        <sequence resource="EMBL-CDS" id="EAW82311"/>
    </conflict>
</comment>
<evidence type="ECO:0000250" key="1">
    <source>
        <dbReference type="UniProtKB" id="Q9CWP4"/>
    </source>
</evidence>
<evidence type="ECO:0000255" key="2"/>
<evidence type="ECO:0000269" key="3">
    <source>
    </source>
</evidence>
<evidence type="ECO:0000269" key="4">
    <source>
    </source>
</evidence>
<evidence type="ECO:0000303" key="5">
    <source>
    </source>
</evidence>
<evidence type="ECO:0000303" key="6">
    <source ref="1"/>
</evidence>
<evidence type="ECO:0000303" key="7">
    <source ref="5"/>
</evidence>
<evidence type="ECO:0000305" key="8"/>
<evidence type="ECO:0000312" key="9">
    <source>
        <dbReference type="HGNC" id="HGNC:24225"/>
    </source>
</evidence>
<dbReference type="EMBL" id="AJ001348">
    <property type="protein sequence ID" value="CAA04692.1"/>
    <property type="status" value="ALT_SEQ"/>
    <property type="molecule type" value="mRNA"/>
</dbReference>
<dbReference type="EMBL" id="AC108002">
    <property type="status" value="NOT_ANNOTATED_CDS"/>
    <property type="molecule type" value="Genomic_DNA"/>
</dbReference>
<dbReference type="EMBL" id="CH471162">
    <property type="protein sequence ID" value="EAW82311.1"/>
    <property type="status" value="ALT_INIT"/>
    <property type="molecule type" value="Genomic_DNA"/>
</dbReference>
<dbReference type="EMBL" id="BC001291">
    <property type="protein sequence ID" value="AAH01291.2"/>
    <property type="status" value="ALT_INIT"/>
    <property type="molecule type" value="mRNA"/>
</dbReference>
<dbReference type="EMBL" id="BC117142">
    <property type="protein sequence ID" value="AAI17143.1"/>
    <property type="status" value="ALT_INIT"/>
    <property type="molecule type" value="mRNA"/>
</dbReference>
<dbReference type="EMBL" id="BC117144">
    <property type="protein sequence ID" value="AAI17145.1"/>
    <property type="status" value="ALT_INIT"/>
    <property type="molecule type" value="mRNA"/>
</dbReference>
<dbReference type="EMBL" id="AI740834">
    <property type="status" value="NOT_ANNOTATED_CDS"/>
    <property type="molecule type" value="mRNA"/>
</dbReference>
<dbReference type="CCDS" id="CCDS59114.1">
    <molecule id="Q17RY6-2"/>
</dbReference>
<dbReference type="CCDS" id="CCDS6385.2">
    <molecule id="Q17RY6-1"/>
</dbReference>
<dbReference type="RefSeq" id="NP_001153826.1">
    <property type="nucleotide sequence ID" value="NM_001160354.1"/>
</dbReference>
<dbReference type="RefSeq" id="NP_001153827.1">
    <molecule id="Q17RY6-2"/>
    <property type="nucleotide sequence ID" value="NM_001160355.2"/>
</dbReference>
<dbReference type="RefSeq" id="NP_059997.3">
    <molecule id="Q17RY6-1"/>
    <property type="nucleotide sequence ID" value="NM_017527.3"/>
</dbReference>
<dbReference type="BioGRID" id="120124">
    <property type="interactions" value="3"/>
</dbReference>
<dbReference type="FunCoup" id="Q17RY6">
    <property type="interactions" value="25"/>
</dbReference>
<dbReference type="IntAct" id="Q17RY6">
    <property type="interactions" value="2"/>
</dbReference>
<dbReference type="STRING" id="9606.ENSP00000292430"/>
<dbReference type="BindingDB" id="Q17RY6"/>
<dbReference type="ChEMBL" id="CHEMBL5291516"/>
<dbReference type="GlyCosmos" id="Q17RY6">
    <property type="glycosylation" value="1 site, No reported glycans"/>
</dbReference>
<dbReference type="GlyGen" id="Q17RY6">
    <property type="glycosylation" value="3 sites, 1 N-linked glycan (1 site), 1 O-linked glycan (1 site)"/>
</dbReference>
<dbReference type="iPTMnet" id="Q17RY6"/>
<dbReference type="PhosphoSitePlus" id="Q17RY6"/>
<dbReference type="BioMuta" id="LY6K"/>
<dbReference type="DMDM" id="189028864"/>
<dbReference type="jPOST" id="Q17RY6"/>
<dbReference type="MassIVE" id="Q17RY6"/>
<dbReference type="PaxDb" id="9606-ENSP00000292430"/>
<dbReference type="PeptideAtlas" id="Q17RY6"/>
<dbReference type="ProteomicsDB" id="32227"/>
<dbReference type="ProteomicsDB" id="61174">
    <molecule id="Q17RY6-1"/>
</dbReference>
<dbReference type="Pumba" id="Q17RY6"/>
<dbReference type="Antibodypedia" id="3032">
    <property type="antibodies" value="111 antibodies from 27 providers"/>
</dbReference>
<dbReference type="CPTC" id="Q17RY6">
    <property type="antibodies" value="4 antibodies"/>
</dbReference>
<dbReference type="DNASU" id="54742"/>
<dbReference type="Ensembl" id="ENST00000292430.10">
    <molecule id="Q17RY6-1"/>
    <property type="protein sequence ID" value="ENSP00000292430.6"/>
    <property type="gene ID" value="ENSG00000160886.13"/>
</dbReference>
<dbReference type="Ensembl" id="ENST00000519387.1">
    <molecule id="Q17RY6-2"/>
    <property type="protein sequence ID" value="ENSP00000429695.1"/>
    <property type="gene ID" value="ENSG00000160886.13"/>
</dbReference>
<dbReference type="GeneID" id="54742"/>
<dbReference type="KEGG" id="hsa:54742"/>
<dbReference type="MANE-Select" id="ENST00000292430.10">
    <property type="protein sequence ID" value="ENSP00000292430.6"/>
    <property type="RefSeq nucleotide sequence ID" value="NM_017527.4"/>
    <property type="RefSeq protein sequence ID" value="NP_059997.3"/>
</dbReference>
<dbReference type="UCSC" id="uc011ljv.3">
    <molecule id="Q17RY6-1"/>
    <property type="organism name" value="human"/>
</dbReference>
<dbReference type="AGR" id="HGNC:24225"/>
<dbReference type="CTD" id="54742"/>
<dbReference type="DisGeNET" id="54742"/>
<dbReference type="GeneCards" id="LY6K"/>
<dbReference type="HGNC" id="HGNC:24225">
    <property type="gene designation" value="LY6K"/>
</dbReference>
<dbReference type="HPA" id="ENSG00000160886">
    <property type="expression patterns" value="Tissue enhanced (esophagus, testis)"/>
</dbReference>
<dbReference type="MIM" id="615093">
    <property type="type" value="gene"/>
</dbReference>
<dbReference type="neXtProt" id="NX_Q17RY6"/>
<dbReference type="OpenTargets" id="ENSG00000160886"/>
<dbReference type="PharmGKB" id="PA134987940"/>
<dbReference type="VEuPathDB" id="HostDB:ENSG00000160886"/>
<dbReference type="eggNOG" id="ENOG502TDVS">
    <property type="taxonomic scope" value="Eukaryota"/>
</dbReference>
<dbReference type="GeneTree" id="ENSGT00940000159966"/>
<dbReference type="HOGENOM" id="CLU_105666_0_0_1"/>
<dbReference type="InParanoid" id="Q17RY6"/>
<dbReference type="OMA" id="MPFFYLK"/>
<dbReference type="OrthoDB" id="9617216at2759"/>
<dbReference type="PAN-GO" id="Q17RY6">
    <property type="GO annotations" value="2 GO annotations based on evolutionary models"/>
</dbReference>
<dbReference type="PhylomeDB" id="Q17RY6"/>
<dbReference type="TreeFam" id="TF336908"/>
<dbReference type="PathwayCommons" id="Q17RY6"/>
<dbReference type="Reactome" id="R-HSA-163125">
    <property type="pathway name" value="Post-translational modification: synthesis of GPI-anchored proteins"/>
</dbReference>
<dbReference type="BioGRID-ORCS" id="54742">
    <property type="hits" value="6 hits in 1144 CRISPR screens"/>
</dbReference>
<dbReference type="GenomeRNAi" id="54742"/>
<dbReference type="Pharos" id="Q17RY6">
    <property type="development level" value="Tbio"/>
</dbReference>
<dbReference type="PRO" id="PR:Q17RY6"/>
<dbReference type="Proteomes" id="UP000005640">
    <property type="component" value="Chromosome 8"/>
</dbReference>
<dbReference type="RNAct" id="Q17RY6">
    <property type="molecule type" value="protein"/>
</dbReference>
<dbReference type="Bgee" id="ENSG00000160886">
    <property type="expression patterns" value="Expressed in right testis and 133 other cell types or tissues"/>
</dbReference>
<dbReference type="ExpressionAtlas" id="Q17RY6">
    <property type="expression patterns" value="baseline and differential"/>
</dbReference>
<dbReference type="GO" id="GO:0001669">
    <property type="term" value="C:acrosomal vesicle"/>
    <property type="evidence" value="ECO:0000250"/>
    <property type="project" value="UniProtKB"/>
</dbReference>
<dbReference type="GO" id="GO:0005576">
    <property type="term" value="C:extracellular region"/>
    <property type="evidence" value="ECO:0000304"/>
    <property type="project" value="Reactome"/>
</dbReference>
<dbReference type="GO" id="GO:0045121">
    <property type="term" value="C:membrane raft"/>
    <property type="evidence" value="ECO:0007669"/>
    <property type="project" value="UniProtKB-SubCell"/>
</dbReference>
<dbReference type="GO" id="GO:0005886">
    <property type="term" value="C:plasma membrane"/>
    <property type="evidence" value="ECO:0000250"/>
    <property type="project" value="UniProtKB"/>
</dbReference>
<dbReference type="GO" id="GO:0098552">
    <property type="term" value="C:side of membrane"/>
    <property type="evidence" value="ECO:0007669"/>
    <property type="project" value="UniProtKB-KW"/>
</dbReference>
<dbReference type="GO" id="GO:0007339">
    <property type="term" value="P:binding of sperm to zona pellucida"/>
    <property type="evidence" value="ECO:0000318"/>
    <property type="project" value="GO_Central"/>
</dbReference>
<dbReference type="CDD" id="cd23550">
    <property type="entry name" value="TFP_LU_ECD_Ly6K"/>
    <property type="match status" value="1"/>
</dbReference>
<dbReference type="FunFam" id="2.10.60.10:FF:000031">
    <property type="entry name" value="Lymphocyte antigen 6 family member K"/>
    <property type="match status" value="1"/>
</dbReference>
<dbReference type="Gene3D" id="2.10.60.10">
    <property type="entry name" value="CD59"/>
    <property type="match status" value="1"/>
</dbReference>
<dbReference type="InterPro" id="IPR045860">
    <property type="entry name" value="Snake_toxin-like_sf"/>
</dbReference>
<dbReference type="InterPro" id="IPR052874">
    <property type="entry name" value="Sperm-ZP_regulatory"/>
</dbReference>
<dbReference type="InterPro" id="IPR035076">
    <property type="entry name" value="Toxin/TOLIP"/>
</dbReference>
<dbReference type="PANTHER" id="PTHR15049">
    <property type="entry name" value="GLYCOSYL-PHOSPHATIDYLINOSITOL-ANCHORED MOLECULE-LIKE PROTEIN-RELATED"/>
    <property type="match status" value="1"/>
</dbReference>
<dbReference type="PANTHER" id="PTHR15049:SF1">
    <property type="entry name" value="LYMPHOCYTE ANTIGEN 6K"/>
    <property type="match status" value="1"/>
</dbReference>
<dbReference type="Pfam" id="PF00087">
    <property type="entry name" value="Toxin_TOLIP"/>
    <property type="match status" value="1"/>
</dbReference>
<dbReference type="SUPFAM" id="SSF57302">
    <property type="entry name" value="Snake toxin-like"/>
    <property type="match status" value="1"/>
</dbReference>